<keyword id="KW-0004">4Fe-4S</keyword>
<keyword id="KW-0408">Iron</keyword>
<keyword id="KW-0411">Iron-sulfur</keyword>
<keyword id="KW-0414">Isoprene biosynthesis</keyword>
<keyword id="KW-0479">Metal-binding</keyword>
<keyword id="KW-0560">Oxidoreductase</keyword>
<keyword id="KW-1185">Reference proteome</keyword>
<dbReference type="EC" id="1.17.7.3" evidence="1"/>
<dbReference type="EMBL" id="AE001273">
    <property type="protein sequence ID" value="AAC67648.1"/>
    <property type="molecule type" value="Genomic_DNA"/>
</dbReference>
<dbReference type="PIR" id="E71562">
    <property type="entry name" value="E71562"/>
</dbReference>
<dbReference type="RefSeq" id="NP_219560.1">
    <property type="nucleotide sequence ID" value="NC_000117.1"/>
</dbReference>
<dbReference type="RefSeq" id="WP_010725012.1">
    <property type="nucleotide sequence ID" value="NC_000117.1"/>
</dbReference>
<dbReference type="STRING" id="272561.CT_057"/>
<dbReference type="EnsemblBacteria" id="AAC67648">
    <property type="protein sequence ID" value="AAC67648"/>
    <property type="gene ID" value="CT_057"/>
</dbReference>
<dbReference type="GeneID" id="884045"/>
<dbReference type="KEGG" id="ctr:CT_057"/>
<dbReference type="PATRIC" id="fig|272561.5.peg.65"/>
<dbReference type="HOGENOM" id="CLU_012689_0_0_0"/>
<dbReference type="InParanoid" id="O84060"/>
<dbReference type="OrthoDB" id="9803214at2"/>
<dbReference type="UniPathway" id="UPA00056">
    <property type="reaction ID" value="UER00096"/>
</dbReference>
<dbReference type="Proteomes" id="UP000000431">
    <property type="component" value="Chromosome"/>
</dbReference>
<dbReference type="GO" id="GO:0051539">
    <property type="term" value="F:4 iron, 4 sulfur cluster binding"/>
    <property type="evidence" value="ECO:0007669"/>
    <property type="project" value="UniProtKB-UniRule"/>
</dbReference>
<dbReference type="GO" id="GO:0046429">
    <property type="term" value="F:4-hydroxy-3-methylbut-2-en-1-yl diphosphate synthase activity (ferredoxin)"/>
    <property type="evidence" value="ECO:0000318"/>
    <property type="project" value="GO_Central"/>
</dbReference>
<dbReference type="GO" id="GO:0141197">
    <property type="term" value="F:4-hydroxy-3-methylbut-2-enyl-diphosphate synthase activity (flavodoxin)"/>
    <property type="evidence" value="ECO:0007669"/>
    <property type="project" value="UniProtKB-EC"/>
</dbReference>
<dbReference type="GO" id="GO:0005506">
    <property type="term" value="F:iron ion binding"/>
    <property type="evidence" value="ECO:0007669"/>
    <property type="project" value="InterPro"/>
</dbReference>
<dbReference type="GO" id="GO:0019288">
    <property type="term" value="P:isopentenyl diphosphate biosynthetic process, methylerythritol 4-phosphate pathway"/>
    <property type="evidence" value="ECO:0000318"/>
    <property type="project" value="GO_Central"/>
</dbReference>
<dbReference type="GO" id="GO:0016114">
    <property type="term" value="P:terpenoid biosynthetic process"/>
    <property type="evidence" value="ECO:0007669"/>
    <property type="project" value="InterPro"/>
</dbReference>
<dbReference type="FunFam" id="3.20.20.20:FF:000005">
    <property type="entry name" value="4-hydroxy-3-methylbut-2-en-1-yl diphosphate synthase (flavodoxin)"/>
    <property type="match status" value="1"/>
</dbReference>
<dbReference type="FunFam" id="3.30.413.10:FF:000006">
    <property type="entry name" value="4-hydroxy-3-methylbut-2-en-1-yl diphosphate synthase (flavodoxin)"/>
    <property type="match status" value="1"/>
</dbReference>
<dbReference type="Gene3D" id="3.20.20.20">
    <property type="entry name" value="Dihydropteroate synthase-like"/>
    <property type="match status" value="1"/>
</dbReference>
<dbReference type="Gene3D" id="3.30.413.10">
    <property type="entry name" value="Sulfite Reductase Hemoprotein, domain 1"/>
    <property type="match status" value="1"/>
</dbReference>
<dbReference type="HAMAP" id="MF_00159">
    <property type="entry name" value="IspG"/>
    <property type="match status" value="1"/>
</dbReference>
<dbReference type="InterPro" id="IPR011005">
    <property type="entry name" value="Dihydropteroate_synth-like_sf"/>
</dbReference>
<dbReference type="InterPro" id="IPR017178">
    <property type="entry name" value="IspG_atypical"/>
</dbReference>
<dbReference type="InterPro" id="IPR004588">
    <property type="entry name" value="IspG_bac-typ"/>
</dbReference>
<dbReference type="InterPro" id="IPR045854">
    <property type="entry name" value="NO2/SO3_Rdtase_4Fe4S_sf"/>
</dbReference>
<dbReference type="NCBIfam" id="TIGR00612">
    <property type="entry name" value="ispG_gcpE"/>
    <property type="match status" value="1"/>
</dbReference>
<dbReference type="NCBIfam" id="NF001912">
    <property type="entry name" value="PRK00694.1"/>
    <property type="match status" value="1"/>
</dbReference>
<dbReference type="PANTHER" id="PTHR30454">
    <property type="entry name" value="4-HYDROXY-3-METHYLBUT-2-EN-1-YL DIPHOSPHATE SYNTHASE"/>
    <property type="match status" value="1"/>
</dbReference>
<dbReference type="PANTHER" id="PTHR30454:SF0">
    <property type="entry name" value="4-HYDROXY-3-METHYLBUT-2-EN-1-YL DIPHOSPHATE SYNTHASE (FERREDOXIN), CHLOROPLASTIC"/>
    <property type="match status" value="1"/>
</dbReference>
<dbReference type="Pfam" id="PF04551">
    <property type="entry name" value="GcpE"/>
    <property type="match status" value="2"/>
</dbReference>
<dbReference type="PIRSF" id="PIRSF037336">
    <property type="entry name" value="IspG_like"/>
    <property type="match status" value="1"/>
</dbReference>
<dbReference type="SUPFAM" id="SSF56014">
    <property type="entry name" value="Nitrite and sulphite reductase 4Fe-4S domain-like"/>
    <property type="match status" value="1"/>
</dbReference>
<evidence type="ECO:0000255" key="1">
    <source>
        <dbReference type="HAMAP-Rule" id="MF_00159"/>
    </source>
</evidence>
<gene>
    <name evidence="1" type="primary">ispG</name>
    <name type="synonym">gcpE</name>
    <name type="ordered locus">CT_057</name>
</gene>
<reference key="1">
    <citation type="journal article" date="1998" name="Science">
        <title>Genome sequence of an obligate intracellular pathogen of humans: Chlamydia trachomatis.</title>
        <authorList>
            <person name="Stephens R.S."/>
            <person name="Kalman S."/>
            <person name="Lammel C.J."/>
            <person name="Fan J."/>
            <person name="Marathe R."/>
            <person name="Aravind L."/>
            <person name="Mitchell W.P."/>
            <person name="Olinger L."/>
            <person name="Tatusov R.L."/>
            <person name="Zhao Q."/>
            <person name="Koonin E.V."/>
            <person name="Davis R.W."/>
        </authorList>
    </citation>
    <scope>NUCLEOTIDE SEQUENCE [LARGE SCALE GENOMIC DNA]</scope>
    <source>
        <strain>ATCC VR-885 / DSM 19411 / UW-3/Cx</strain>
    </source>
</reference>
<name>ISPG_CHLTR</name>
<proteinExistence type="inferred from homology"/>
<comment type="function">
    <text evidence="1">Converts 2C-methyl-D-erythritol 2,4-cyclodiphosphate (ME-2,4cPP) into 1-hydroxy-2-methyl-2-(E)-butenyl 4-diphosphate.</text>
</comment>
<comment type="catalytic activity">
    <reaction evidence="1">
        <text>(2E)-4-hydroxy-3-methylbut-2-enyl diphosphate + oxidized [flavodoxin] + H2O + 2 H(+) = 2-C-methyl-D-erythritol 2,4-cyclic diphosphate + reduced [flavodoxin]</text>
        <dbReference type="Rhea" id="RHEA:43604"/>
        <dbReference type="Rhea" id="RHEA-COMP:10622"/>
        <dbReference type="Rhea" id="RHEA-COMP:10623"/>
        <dbReference type="ChEBI" id="CHEBI:15377"/>
        <dbReference type="ChEBI" id="CHEBI:15378"/>
        <dbReference type="ChEBI" id="CHEBI:57618"/>
        <dbReference type="ChEBI" id="CHEBI:58210"/>
        <dbReference type="ChEBI" id="CHEBI:58483"/>
        <dbReference type="ChEBI" id="CHEBI:128753"/>
        <dbReference type="EC" id="1.17.7.3"/>
    </reaction>
</comment>
<comment type="cofactor">
    <cofactor evidence="1">
        <name>[4Fe-4S] cluster</name>
        <dbReference type="ChEBI" id="CHEBI:49883"/>
    </cofactor>
    <text evidence="1">Binds 1 [4Fe-4S] cluster.</text>
</comment>
<comment type="pathway">
    <text evidence="1">Isoprenoid biosynthesis; isopentenyl diphosphate biosynthesis via DXP pathway; isopentenyl diphosphate from 1-deoxy-D-xylulose 5-phosphate: step 5/6.</text>
</comment>
<comment type="similarity">
    <text evidence="1">Belongs to the IspG family.</text>
</comment>
<protein>
    <recommendedName>
        <fullName evidence="1">4-hydroxy-3-methylbut-2-en-1-yl diphosphate synthase (flavodoxin)</fullName>
        <ecNumber evidence="1">1.17.7.3</ecNumber>
    </recommendedName>
    <alternativeName>
        <fullName evidence="1">1-hydroxy-2-methyl-2-(E)-butenyl 4-diphosphate synthase</fullName>
    </alternativeName>
</protein>
<sequence>MATPCIQNAFRRKTLPVRIGDLFVGSEHSIKIQSMTTTATTDVDGTVRQICALQEWGCDIVRVTVQGLREVHACEHIKDRLIQQNISIPLVADIHFFPQAAIHVVDCVDKVRINPGNYVDKRNMFTGKIYSDEQYAHSLEHLMNKFSPLVEKCKRLGKAMRIGVNHGSLSERVTQRYGNTIEGMVYSALEYAEVCVAMDYHDVIFSMKSSNPKVMVAAYRSLAYELDQREWSYPLHLGVTEAGSGTAGIVKSAVGIGTLLSEGLGDTIRCSLTGSPINEIPICIDLLKQTTELSERWGEADNPFAIHSSKQLGTRNTLNTPPWGNVYGLLINLTDVQLLTAEPIELLQCLGIDTTTGKIDPTTPEGVVVPKAMRSSPIVSEIEKHLLVFNKEDVPILNPMNEEEWLSEETLSAPFVYFEVTDIHTARRFFSLRQHSTQPVCLSFSLDPHLSKNEAIIDLSARLGALLLDGLGSCVLLDFVDIKLSRTLGFLILQSANIRSVTVEYVSCPGCGRTLFDLLAVSQRIRERTQHLPGGLKIAVMGCIVNGPGEMADADFGYVGSKPGMIDLYVKHKCVKSCIPIENAEEELVQLLKEHGVWKEPE</sequence>
<accession>O84060</accession>
<organism>
    <name type="scientific">Chlamydia trachomatis serovar D (strain ATCC VR-885 / DSM 19411 / UW-3/Cx)</name>
    <dbReference type="NCBI Taxonomy" id="272561"/>
    <lineage>
        <taxon>Bacteria</taxon>
        <taxon>Pseudomonadati</taxon>
        <taxon>Chlamydiota</taxon>
        <taxon>Chlamydiia</taxon>
        <taxon>Chlamydiales</taxon>
        <taxon>Chlamydiaceae</taxon>
        <taxon>Chlamydia/Chlamydophila group</taxon>
        <taxon>Chlamydia</taxon>
    </lineage>
</organism>
<feature type="chain" id="PRO_0000190561" description="4-hydroxy-3-methylbut-2-en-1-yl diphosphate synthase (flavodoxin)">
    <location>
        <begin position="1"/>
        <end position="602"/>
    </location>
</feature>
<feature type="binding site" evidence="1">
    <location>
        <position position="508"/>
    </location>
    <ligand>
        <name>[4Fe-4S] cluster</name>
        <dbReference type="ChEBI" id="CHEBI:49883"/>
    </ligand>
</feature>
<feature type="binding site" evidence="1">
    <location>
        <position position="511"/>
    </location>
    <ligand>
        <name>[4Fe-4S] cluster</name>
        <dbReference type="ChEBI" id="CHEBI:49883"/>
    </ligand>
</feature>
<feature type="binding site" evidence="1">
    <location>
        <position position="543"/>
    </location>
    <ligand>
        <name>[4Fe-4S] cluster</name>
        <dbReference type="ChEBI" id="CHEBI:49883"/>
    </ligand>
</feature>
<feature type="binding site" evidence="1">
    <location>
        <position position="550"/>
    </location>
    <ligand>
        <name>[4Fe-4S] cluster</name>
        <dbReference type="ChEBI" id="CHEBI:49883"/>
    </ligand>
</feature>